<evidence type="ECO:0000255" key="1">
    <source>
        <dbReference type="HAMAP-Rule" id="MF_01213"/>
    </source>
</evidence>
<evidence type="ECO:0000255" key="2">
    <source>
        <dbReference type="PROSITE-ProRule" id="PRU01175"/>
    </source>
</evidence>
<proteinExistence type="inferred from homology"/>
<keyword id="KW-0378">Hydrolase</keyword>
<protein>
    <recommendedName>
        <fullName evidence="1">Deoxyguanosinetriphosphate triphosphohydrolase-like protein</fullName>
    </recommendedName>
</protein>
<sequence>MDWQTLLTRERLGKPVHSNDELGRSAFHKDHDRIIFSGAFRRLGRKTQVHPVSSNDHIHTRLTHSLEVACVGRSLGMRVGEILREELPEWCDPSDLGVIVQSACLAHDIGNPPFGHSGEDAIRNWFQQAAGRGWLDEMSDAERSDFLHFEGNAQGFRVLTQLEYHQFDGGTRLTYATLGTYLKYPWTSRHAEALGYKKHKFGCYQSELPLLEQITHKLGMPQLDDERWARHPLVYLMEAADDICYGLIDLEDGLEMELLEYSEVEALLLGLVGDDLPDTYRQLGPRDSRRRKLAILRGKAIEHLTNAAARAFVDQQQALLAGQLAGDLVEHMHGPAKLCVQRAKAIAREKIFQDKRKTLHEIGAYTTLEILLNAFCGAALEQYGGHTPSFKNRRILDLLGRNAPDPQWPLYRAFLQVIDFIAGMTDSYATEMAREMTGRSSPS</sequence>
<name>DGTL2_PSEA8</name>
<feature type="chain" id="PRO_1000138940" description="Deoxyguanosinetriphosphate triphosphohydrolase-like protein">
    <location>
        <begin position="1"/>
        <end position="443"/>
    </location>
</feature>
<feature type="domain" description="HD" evidence="2">
    <location>
        <begin position="61"/>
        <end position="246"/>
    </location>
</feature>
<gene>
    <name type="ordered locus">PLES_20171</name>
</gene>
<dbReference type="EMBL" id="FM209186">
    <property type="protein sequence ID" value="CAW26745.1"/>
    <property type="molecule type" value="Genomic_DNA"/>
</dbReference>
<dbReference type="RefSeq" id="WP_003091265.1">
    <property type="nucleotide sequence ID" value="NC_011770.1"/>
</dbReference>
<dbReference type="SMR" id="B7UXM6"/>
<dbReference type="KEGG" id="pag:PLES_20171"/>
<dbReference type="HOGENOM" id="CLU_028163_2_0_6"/>
<dbReference type="GO" id="GO:0008832">
    <property type="term" value="F:dGTPase activity"/>
    <property type="evidence" value="ECO:0007669"/>
    <property type="project" value="TreeGrafter"/>
</dbReference>
<dbReference type="GO" id="GO:0006203">
    <property type="term" value="P:dGTP catabolic process"/>
    <property type="evidence" value="ECO:0007669"/>
    <property type="project" value="TreeGrafter"/>
</dbReference>
<dbReference type="CDD" id="cd00077">
    <property type="entry name" value="HDc"/>
    <property type="match status" value="1"/>
</dbReference>
<dbReference type="FunFam" id="1.10.3410.10:FF:000002">
    <property type="entry name" value="Deoxyguanosinetriphosphate triphosphohydrolase-like protein"/>
    <property type="match status" value="1"/>
</dbReference>
<dbReference type="Gene3D" id="1.10.3550.10">
    <property type="entry name" value="eoxyguanosinetriphosphate triphosphohydrolase domain-like"/>
    <property type="match status" value="1"/>
</dbReference>
<dbReference type="Gene3D" id="1.10.3210.10">
    <property type="entry name" value="Hypothetical protein af1432"/>
    <property type="match status" value="1"/>
</dbReference>
<dbReference type="Gene3D" id="1.10.3410.10">
    <property type="entry name" value="putative deoxyguanosinetriphosphate triphosphohydrolase like domain"/>
    <property type="match status" value="1"/>
</dbReference>
<dbReference type="HAMAP" id="MF_01213">
    <property type="entry name" value="dGTPase_type3"/>
    <property type="match status" value="1"/>
</dbReference>
<dbReference type="InterPro" id="IPR023293">
    <property type="entry name" value="dGTP_triP_hydro_central_sf"/>
</dbReference>
<dbReference type="InterPro" id="IPR027432">
    <property type="entry name" value="dGTP_triphosphohydrolase_C"/>
</dbReference>
<dbReference type="InterPro" id="IPR006261">
    <property type="entry name" value="dGTPase"/>
</dbReference>
<dbReference type="InterPro" id="IPR050135">
    <property type="entry name" value="dGTPase-like"/>
</dbReference>
<dbReference type="InterPro" id="IPR023024">
    <property type="entry name" value="dNTPase_3"/>
</dbReference>
<dbReference type="InterPro" id="IPR003607">
    <property type="entry name" value="HD/PDEase_dom"/>
</dbReference>
<dbReference type="InterPro" id="IPR006674">
    <property type="entry name" value="HD_domain"/>
</dbReference>
<dbReference type="NCBIfam" id="TIGR01353">
    <property type="entry name" value="dGTP_triPase"/>
    <property type="match status" value="1"/>
</dbReference>
<dbReference type="NCBIfam" id="NF002205">
    <property type="entry name" value="PRK01096.1"/>
    <property type="match status" value="1"/>
</dbReference>
<dbReference type="PANTHER" id="PTHR11373:SF40">
    <property type="entry name" value="DEOXYGUANOSINETRIPHOSPHATE TRIPHOSPHOHYDROLASE-LIKE PROTEIN 2"/>
    <property type="match status" value="1"/>
</dbReference>
<dbReference type="PANTHER" id="PTHR11373">
    <property type="entry name" value="DEOXYNUCLEOSIDE TRIPHOSPHATE TRIPHOSPHOHYDROLASE"/>
    <property type="match status" value="1"/>
</dbReference>
<dbReference type="Pfam" id="PF01966">
    <property type="entry name" value="HD"/>
    <property type="match status" value="1"/>
</dbReference>
<dbReference type="SMART" id="SM00471">
    <property type="entry name" value="HDc"/>
    <property type="match status" value="1"/>
</dbReference>
<dbReference type="SUPFAM" id="SSF109604">
    <property type="entry name" value="HD-domain/PDEase-like"/>
    <property type="match status" value="1"/>
</dbReference>
<dbReference type="PROSITE" id="PS51831">
    <property type="entry name" value="HD"/>
    <property type="match status" value="1"/>
</dbReference>
<reference key="1">
    <citation type="journal article" date="2009" name="Genome Res.">
        <title>Newly introduced genomic prophage islands are critical determinants of in vivo competitiveness in the Liverpool epidemic strain of Pseudomonas aeruginosa.</title>
        <authorList>
            <person name="Winstanley C."/>
            <person name="Langille M.G.I."/>
            <person name="Fothergill J.L."/>
            <person name="Kukavica-Ibrulj I."/>
            <person name="Paradis-Bleau C."/>
            <person name="Sanschagrin F."/>
            <person name="Thomson N.R."/>
            <person name="Winsor G.L."/>
            <person name="Quail M.A."/>
            <person name="Lennard N."/>
            <person name="Bignell A."/>
            <person name="Clarke L."/>
            <person name="Seeger K."/>
            <person name="Saunders D."/>
            <person name="Harris D."/>
            <person name="Parkhill J."/>
            <person name="Hancock R.E.W."/>
            <person name="Brinkman F.S.L."/>
            <person name="Levesque R.C."/>
        </authorList>
    </citation>
    <scope>NUCLEOTIDE SEQUENCE [LARGE SCALE GENOMIC DNA]</scope>
    <source>
        <strain>LESB58</strain>
    </source>
</reference>
<comment type="similarity">
    <text evidence="1">Belongs to the dGTPase family. Type 3 subfamily.</text>
</comment>
<organism>
    <name type="scientific">Pseudomonas aeruginosa (strain LESB58)</name>
    <dbReference type="NCBI Taxonomy" id="557722"/>
    <lineage>
        <taxon>Bacteria</taxon>
        <taxon>Pseudomonadati</taxon>
        <taxon>Pseudomonadota</taxon>
        <taxon>Gammaproteobacteria</taxon>
        <taxon>Pseudomonadales</taxon>
        <taxon>Pseudomonadaceae</taxon>
        <taxon>Pseudomonas</taxon>
    </lineage>
</organism>
<accession>B7UXM6</accession>